<gene>
    <name type="primary">ctsR</name>
    <name type="ordered locus">SH2487</name>
</gene>
<reference key="1">
    <citation type="journal article" date="2005" name="J. Bacteriol.">
        <title>Whole-genome sequencing of Staphylococcus haemolyticus uncovers the extreme plasticity of its genome and the evolution of human-colonizing staphylococcal species.</title>
        <authorList>
            <person name="Takeuchi F."/>
            <person name="Watanabe S."/>
            <person name="Baba T."/>
            <person name="Yuzawa H."/>
            <person name="Ito T."/>
            <person name="Morimoto Y."/>
            <person name="Kuroda M."/>
            <person name="Cui L."/>
            <person name="Takahashi M."/>
            <person name="Ankai A."/>
            <person name="Baba S."/>
            <person name="Fukui S."/>
            <person name="Lee J.C."/>
            <person name="Hiramatsu K."/>
        </authorList>
    </citation>
    <scope>NUCLEOTIDE SEQUENCE [LARGE SCALE GENOMIC DNA]</scope>
    <source>
        <strain>JCSC1435</strain>
    </source>
</reference>
<organism>
    <name type="scientific">Staphylococcus haemolyticus (strain JCSC1435)</name>
    <dbReference type="NCBI Taxonomy" id="279808"/>
    <lineage>
        <taxon>Bacteria</taxon>
        <taxon>Bacillati</taxon>
        <taxon>Bacillota</taxon>
        <taxon>Bacilli</taxon>
        <taxon>Bacillales</taxon>
        <taxon>Staphylococcaceae</taxon>
        <taxon>Staphylococcus</taxon>
    </lineage>
</organism>
<proteinExistence type="inferred from homology"/>
<sequence>MHNMSDIIEQYIKKLFEESNEDVVEIQRANIAQRFDCVPSQLNYVIKTRFTNEHGYEIESKRGGGGYIRITKIENKDATGYINHLLQIIGPSISQQQAYYILDGLLDKGLISEREARMIQVIVDRETLKMDVVARDIIRANILKRLLPIINFY</sequence>
<name>CTSR_STAHJ</name>
<dbReference type="EMBL" id="AP006716">
    <property type="protein sequence ID" value="BAE05796.1"/>
    <property type="molecule type" value="Genomic_DNA"/>
</dbReference>
<dbReference type="RefSeq" id="WP_011276739.1">
    <property type="nucleotide sequence ID" value="NC_007168.1"/>
</dbReference>
<dbReference type="SMR" id="Q4L3I1"/>
<dbReference type="KEGG" id="sha:SH2487"/>
<dbReference type="eggNOG" id="COG4463">
    <property type="taxonomic scope" value="Bacteria"/>
</dbReference>
<dbReference type="HOGENOM" id="CLU_118139_0_0_9"/>
<dbReference type="OrthoDB" id="1680813at2"/>
<dbReference type="Proteomes" id="UP000000543">
    <property type="component" value="Chromosome"/>
</dbReference>
<dbReference type="GO" id="GO:0003677">
    <property type="term" value="F:DNA binding"/>
    <property type="evidence" value="ECO:0007669"/>
    <property type="project" value="UniProtKB-KW"/>
</dbReference>
<dbReference type="GO" id="GO:0006355">
    <property type="term" value="P:regulation of DNA-templated transcription"/>
    <property type="evidence" value="ECO:0007669"/>
    <property type="project" value="InterPro"/>
</dbReference>
<dbReference type="FunFam" id="3.30.56.130:FF:000001">
    <property type="entry name" value="Transcriptional regulator CtsR"/>
    <property type="match status" value="1"/>
</dbReference>
<dbReference type="Gene3D" id="1.10.1200.150">
    <property type="entry name" value="Transcriptional regulator CtsR, C-terminal domain"/>
    <property type="match status" value="1"/>
</dbReference>
<dbReference type="Gene3D" id="3.30.56.130">
    <property type="entry name" value="Transcriptional regulator CtsR, winged HTH domain"/>
    <property type="match status" value="1"/>
</dbReference>
<dbReference type="InterPro" id="IPR008463">
    <property type="entry name" value="CtsR"/>
</dbReference>
<dbReference type="InterPro" id="IPR041473">
    <property type="entry name" value="CtsR_C"/>
</dbReference>
<dbReference type="InterPro" id="IPR041908">
    <property type="entry name" value="CtsR_C_sf"/>
</dbReference>
<dbReference type="InterPro" id="IPR040465">
    <property type="entry name" value="CtsR_N"/>
</dbReference>
<dbReference type="InterPro" id="IPR041902">
    <property type="entry name" value="CtsR_N_sf"/>
</dbReference>
<dbReference type="Pfam" id="PF05848">
    <property type="entry name" value="CtsR"/>
    <property type="match status" value="1"/>
</dbReference>
<dbReference type="Pfam" id="PF17727">
    <property type="entry name" value="CtsR_C"/>
    <property type="match status" value="1"/>
</dbReference>
<dbReference type="PIRSF" id="PIRSF010607">
    <property type="entry name" value="Txn_repr_CtsR"/>
    <property type="match status" value="1"/>
</dbReference>
<keyword id="KW-0238">DNA-binding</keyword>
<keyword id="KW-0678">Repressor</keyword>
<keyword id="KW-0346">Stress response</keyword>
<keyword id="KW-0804">Transcription</keyword>
<keyword id="KW-0805">Transcription regulation</keyword>
<comment type="function">
    <text evidence="1">Negative regulator of clpC, clpB and clpP transcription by binding directly and specifically to their promoter region.</text>
</comment>
<comment type="similarity">
    <text evidence="2">Belongs to the CtsR family.</text>
</comment>
<accession>Q4L3I1</accession>
<evidence type="ECO:0000250" key="1"/>
<evidence type="ECO:0000305" key="2"/>
<protein>
    <recommendedName>
        <fullName>Transcriptional regulator CtsR</fullName>
    </recommendedName>
</protein>
<feature type="chain" id="PRO_0000274139" description="Transcriptional regulator CtsR">
    <location>
        <begin position="1"/>
        <end position="153"/>
    </location>
</feature>